<accession>Q97GC0</accession>
<evidence type="ECO:0000250" key="1"/>
<evidence type="ECO:0000255" key="2">
    <source>
        <dbReference type="PROSITE-ProRule" id="PRU00088"/>
    </source>
</evidence>
<evidence type="ECO:0000269" key="3">
    <source>
    </source>
</evidence>
<evidence type="ECO:0000269" key="4">
    <source>
    </source>
</evidence>
<evidence type="ECO:0000269" key="5">
    <source>
    </source>
</evidence>
<evidence type="ECO:0000269" key="6">
    <source>
    </source>
</evidence>
<evidence type="ECO:0000305" key="7"/>
<comment type="function">
    <text evidence="4 5">Catalyzes the four-electron reduction of molecular oxygen to water. In fact, functions as the terminal component of an NADH oxidase (NADH:O(2) oxidoreductase) when using NADH:rubredoxin oxidoreductase (NROR) and rubredoxin (Rd) as electron transport intermediaries between NADH and FDP. Is thus able to reductively scavenge intracellular dioxygen and is part of an oxidative stress defense system in C.acetobutylicum, an obligate anaerobic bacterium. Can also serve as the terminal component of an NADH:nitric oxide oxidoreductase (NOR) with a catalytic efficiency comparable to that of its NADH oxidase activity, and therefore might have an in vivo role in scavenging nitric oxide.</text>
</comment>
<comment type="catalytic activity">
    <reaction evidence="4 5">
        <text>2 NADH + O2 + 2 H(+) = 2 NAD(+) + 2 H2O</text>
        <dbReference type="Rhea" id="RHEA:37799"/>
        <dbReference type="ChEBI" id="CHEBI:15377"/>
        <dbReference type="ChEBI" id="CHEBI:15378"/>
        <dbReference type="ChEBI" id="CHEBI:15379"/>
        <dbReference type="ChEBI" id="CHEBI:57540"/>
        <dbReference type="ChEBI" id="CHEBI:57945"/>
        <dbReference type="EC" id="1.6.3.4"/>
    </reaction>
</comment>
<comment type="cofactor">
    <cofactor evidence="4">
        <name>FMN</name>
        <dbReference type="ChEBI" id="CHEBI:58210"/>
    </cofactor>
    <text evidence="4">Binds 1 FMN per subunit.</text>
</comment>
<comment type="cofactor">
    <cofactor evidence="4">
        <name>Fe cation</name>
        <dbReference type="ChEBI" id="CHEBI:24875"/>
    </cofactor>
    <text evidence="4">Binds 2 iron ions per subunit.</text>
</comment>
<comment type="biophysicochemical properties">
    <kinetics>
        <KM evidence="4">16 uM for O(2)</KM>
        <KM evidence="4">40 uM for NO</KM>
    </kinetics>
</comment>
<comment type="subunit">
    <text evidence="4 5">Homotetramer.</text>
</comment>
<comment type="induction">
    <text evidence="3 6">Up-regulated upon exposure to O(2). Repressed by PerR.</text>
</comment>
<comment type="domain">
    <text>Consists of an N-terminal non-heme diiron domain and a C-terminal flavodoxin-like domain.</text>
</comment>
<comment type="similarity">
    <text evidence="7">In the N-terminal section; belongs to the zinc metallo-hydrolase group 3 family.</text>
</comment>
<protein>
    <recommendedName>
        <fullName>Flavo-diiron protein FprA2</fullName>
        <shortName>FDP 2</shortName>
    </recommendedName>
    <alternativeName>
        <fullName>Flavoprotein A2</fullName>
    </alternativeName>
    <alternativeName>
        <fullName>H(2)O-forming NADH oxidase</fullName>
        <ecNumber evidence="4 5">1.6.3.4</ecNumber>
    </alternativeName>
    <alternativeName>
        <fullName>NADH oxidase</fullName>
    </alternativeName>
    <alternativeName>
        <fullName>NADH:O(2) oxidoreductase</fullName>
    </alternativeName>
</protein>
<name>FPRA2_CLOAB</name>
<reference key="1">
    <citation type="journal article" date="2001" name="J. Bacteriol.">
        <title>Genome sequence and comparative analysis of the solvent-producing bacterium Clostridium acetobutylicum.</title>
        <authorList>
            <person name="Noelling J."/>
            <person name="Breton G."/>
            <person name="Omelchenko M.V."/>
            <person name="Makarova K.S."/>
            <person name="Zeng Q."/>
            <person name="Gibson R."/>
            <person name="Lee H.M."/>
            <person name="Dubois J."/>
            <person name="Qiu D."/>
            <person name="Hitti J."/>
            <person name="Wolf Y.I."/>
            <person name="Tatusov R.L."/>
            <person name="Sabathe F."/>
            <person name="Doucette-Stamm L.A."/>
            <person name="Soucaille P."/>
            <person name="Daly M.J."/>
            <person name="Bennett G.N."/>
            <person name="Koonin E.V."/>
            <person name="Smith D.R."/>
        </authorList>
    </citation>
    <scope>NUCLEOTIDE SEQUENCE [LARGE SCALE GENOMIC DNA]</scope>
    <source>
        <strain>ATCC 824 / DSM 792 / JCM 1419 / IAM 19013 / LMG 5710 / NBRC 13948 / NRRL B-527 / VKM B-1787 / 2291 / W</strain>
    </source>
</reference>
<reference key="2">
    <citation type="journal article" date="2009" name="Appl. Environ. Microbiol.">
        <title>O2 and reactive oxygen species detoxification complex, composed of O2-responsive NADH:rubredoxin oxidoreductase-flavoprotein A2-desulfoferrodoxin operon enzymes, rubperoxin, and rubredoxin, in Clostridium acetobutylicum.</title>
        <authorList>
            <person name="Kawasaki S."/>
            <person name="Sakai Y."/>
            <person name="Takahashi T."/>
            <person name="Suzuki I."/>
            <person name="Niimura Y."/>
        </authorList>
    </citation>
    <scope>PROTEIN SEQUENCE OF 1-20</scope>
    <scope>FUNCTION</scope>
    <scope>CATALYTIC ACTIVITY</scope>
    <scope>FMN COFACTOR</scope>
    <scope>SUBUNIT</scope>
    <source>
        <strain>ATCC 824 / DSM 792 / JCM 1419 / IAM 19013 / LMG 5710 / NBRC 13948 / NRRL B-527 / VKM B-1787 / 2291 / W</strain>
    </source>
</reference>
<reference key="3">
    <citation type="journal article" date="2005" name="Appl. Environ. Microbiol.">
        <title>Adaptive responses to oxygen stress in obligatory anaerobes Clostridium acetobutylicum and Clostridium aminovalericum.</title>
        <authorList>
            <person name="Kawasaki S."/>
            <person name="Watamura Y."/>
            <person name="Ono M."/>
            <person name="Watanabe T."/>
            <person name="Takeda K."/>
            <person name="Niimura Y."/>
        </authorList>
    </citation>
    <scope>INDUCTION BY O(2)</scope>
    <source>
        <strain>ATCC 824 / DSM 792 / JCM 1419 / IAM 19013 / LMG 5710 / NBRC 13948 / NRRL B-527 / VKM B-1787 / 2291 / W</strain>
    </source>
</reference>
<reference key="4">
    <citation type="journal article" date="2009" name="FEBS Lett.">
        <title>Reductive dioxygen scavenging by flavo-diiron proteins of Clostridium acetobutylicum.</title>
        <authorList>
            <person name="Hillmann F."/>
            <person name="Riebe O."/>
            <person name="Fischer R.J."/>
            <person name="Mot A."/>
            <person name="Caranto J.D."/>
            <person name="Kurtz D.M. Jr."/>
            <person name="Bahl H."/>
        </authorList>
    </citation>
    <scope>FUNCTION</scope>
    <scope>CATALYTIC ACTIVITY</scope>
    <scope>COFACTOR</scope>
    <scope>KINETIC PARAMETERS</scope>
    <scope>SUBSTRATE SPECIFICITY</scope>
    <scope>SUBUNIT</scope>
    <source>
        <strain>ATCC 824 / DSM 792 / JCM 1419 / IAM 19013 / LMG 5710 / NBRC 13948 / NRRL B-527 / VKM B-1787 / 2291 / W</strain>
    </source>
</reference>
<reference key="5">
    <citation type="journal article" date="2009" name="J. Bacteriol.">
        <title>The role of PerR in O2-affected gene expression of Clostridium acetobutylicum.</title>
        <authorList>
            <person name="Hillmann F."/>
            <person name="Doring C."/>
            <person name="Riebe O."/>
            <person name="Ehrenreich A."/>
            <person name="Fischer R.J."/>
            <person name="Bahl H."/>
        </authorList>
    </citation>
    <scope>INDUCTION BY O(2)</scope>
    <scope>REPRESSION BY PERR</scope>
    <source>
        <strain>ATCC 824 / DSM 792 / JCM 1419 / IAM 19013 / LMG 5710 / NBRC 13948 / NRRL B-527 / VKM B-1787 / 2291 / W</strain>
    </source>
</reference>
<organism>
    <name type="scientific">Clostridium acetobutylicum (strain ATCC 824 / DSM 792 / JCM 1419 / IAM 19013 / LMG 5710 / NBRC 13948 / NRRL B-527 / VKM B-1787 / 2291 / W)</name>
    <dbReference type="NCBI Taxonomy" id="272562"/>
    <lineage>
        <taxon>Bacteria</taxon>
        <taxon>Bacillati</taxon>
        <taxon>Bacillota</taxon>
        <taxon>Clostridia</taxon>
        <taxon>Eubacteriales</taxon>
        <taxon>Clostridiaceae</taxon>
        <taxon>Clostridium</taxon>
    </lineage>
</organism>
<proteinExistence type="evidence at protein level"/>
<keyword id="KW-0216">Detoxification</keyword>
<keyword id="KW-0903">Direct protein sequencing</keyword>
<keyword id="KW-0249">Electron transport</keyword>
<keyword id="KW-0285">Flavoprotein</keyword>
<keyword id="KW-0288">FMN</keyword>
<keyword id="KW-0408">Iron</keyword>
<keyword id="KW-0479">Metal-binding</keyword>
<keyword id="KW-0520">NAD</keyword>
<keyword id="KW-0560">Oxidoreductase</keyword>
<keyword id="KW-1185">Reference proteome</keyword>
<keyword id="KW-0346">Stress response</keyword>
<keyword id="KW-0813">Transport</keyword>
<gene>
    <name type="primary">fprA2</name>
    <name type="ordered locus">CA_C2449</name>
</gene>
<dbReference type="EC" id="1.6.3.4" evidence="4 5"/>
<dbReference type="EMBL" id="AE001437">
    <property type="protein sequence ID" value="AAK80403.1"/>
    <property type="molecule type" value="Genomic_DNA"/>
</dbReference>
<dbReference type="PIR" id="H97201">
    <property type="entry name" value="H97201"/>
</dbReference>
<dbReference type="RefSeq" id="NP_349063.1">
    <property type="nucleotide sequence ID" value="NC_003030.1"/>
</dbReference>
<dbReference type="RefSeq" id="WP_010965744.1">
    <property type="nucleotide sequence ID" value="NC_003030.1"/>
</dbReference>
<dbReference type="SMR" id="Q97GC0"/>
<dbReference type="STRING" id="272562.CA_C2449"/>
<dbReference type="KEGG" id="cac:CA_C2449"/>
<dbReference type="PATRIC" id="fig|272562.8.peg.2645"/>
<dbReference type="eggNOG" id="COG0426">
    <property type="taxonomic scope" value="Bacteria"/>
</dbReference>
<dbReference type="HOGENOM" id="CLU_017490_2_1_9"/>
<dbReference type="OrthoDB" id="9807946at2"/>
<dbReference type="SABIO-RK" id="Q97GC0"/>
<dbReference type="Proteomes" id="UP000000814">
    <property type="component" value="Chromosome"/>
</dbReference>
<dbReference type="GO" id="GO:0009055">
    <property type="term" value="F:electron transfer activity"/>
    <property type="evidence" value="ECO:0000314"/>
    <property type="project" value="UniProtKB"/>
</dbReference>
<dbReference type="GO" id="GO:0010181">
    <property type="term" value="F:FMN binding"/>
    <property type="evidence" value="ECO:0000314"/>
    <property type="project" value="UniProtKB"/>
</dbReference>
<dbReference type="GO" id="GO:0005506">
    <property type="term" value="F:iron ion binding"/>
    <property type="evidence" value="ECO:0000314"/>
    <property type="project" value="UniProtKB"/>
</dbReference>
<dbReference type="GO" id="GO:0016966">
    <property type="term" value="F:nitric oxide reductase activity"/>
    <property type="evidence" value="ECO:0000314"/>
    <property type="project" value="UniProtKB"/>
</dbReference>
<dbReference type="GO" id="GO:0050664">
    <property type="term" value="F:oxidoreductase activity, acting on NAD(P)H, oxygen as acceptor"/>
    <property type="evidence" value="ECO:0000314"/>
    <property type="project" value="UniProtKB"/>
</dbReference>
<dbReference type="GO" id="GO:0072593">
    <property type="term" value="P:reactive oxygen species metabolic process"/>
    <property type="evidence" value="ECO:0000314"/>
    <property type="project" value="UniProtKB"/>
</dbReference>
<dbReference type="GO" id="GO:0009636">
    <property type="term" value="P:response to toxic substance"/>
    <property type="evidence" value="ECO:0007669"/>
    <property type="project" value="UniProtKB-KW"/>
</dbReference>
<dbReference type="CDD" id="cd07709">
    <property type="entry name" value="flavodiiron_proteins_MBL-fold"/>
    <property type="match status" value="1"/>
</dbReference>
<dbReference type="Gene3D" id="3.40.50.360">
    <property type="match status" value="1"/>
</dbReference>
<dbReference type="Gene3D" id="3.60.15.10">
    <property type="entry name" value="Ribonuclease Z/Hydroxyacylglutathione hydrolase-like"/>
    <property type="match status" value="1"/>
</dbReference>
<dbReference type="InterPro" id="IPR008254">
    <property type="entry name" value="Flavodoxin/NO_synth"/>
</dbReference>
<dbReference type="InterPro" id="IPR001226">
    <property type="entry name" value="Flavodoxin_CS"/>
</dbReference>
<dbReference type="InterPro" id="IPR029039">
    <property type="entry name" value="Flavoprotein-like_sf"/>
</dbReference>
<dbReference type="InterPro" id="IPR001279">
    <property type="entry name" value="Metallo-B-lactamas"/>
</dbReference>
<dbReference type="InterPro" id="IPR051285">
    <property type="entry name" value="NADH_oxidoreductase_modular"/>
</dbReference>
<dbReference type="InterPro" id="IPR045761">
    <property type="entry name" value="ODP_dom"/>
</dbReference>
<dbReference type="InterPro" id="IPR036866">
    <property type="entry name" value="RibonucZ/Hydroxyglut_hydro"/>
</dbReference>
<dbReference type="InterPro" id="IPR016440">
    <property type="entry name" value="Rubredoxin-O_OxRdtase"/>
</dbReference>
<dbReference type="PANTHER" id="PTHR32145">
    <property type="entry name" value="DIFLAVIN FLAVOPROTEIN A 2-RELATED"/>
    <property type="match status" value="1"/>
</dbReference>
<dbReference type="PANTHER" id="PTHR32145:SF11">
    <property type="entry name" value="DIFLAVIN FLAVOPROTEIN A 2-RELATED"/>
    <property type="match status" value="1"/>
</dbReference>
<dbReference type="Pfam" id="PF00258">
    <property type="entry name" value="Flavodoxin_1"/>
    <property type="match status" value="1"/>
</dbReference>
<dbReference type="Pfam" id="PF19583">
    <property type="entry name" value="ODP"/>
    <property type="match status" value="1"/>
</dbReference>
<dbReference type="PIRSF" id="PIRSF005243">
    <property type="entry name" value="ROO"/>
    <property type="match status" value="1"/>
</dbReference>
<dbReference type="SMART" id="SM00849">
    <property type="entry name" value="Lactamase_B"/>
    <property type="match status" value="1"/>
</dbReference>
<dbReference type="SUPFAM" id="SSF52218">
    <property type="entry name" value="Flavoproteins"/>
    <property type="match status" value="1"/>
</dbReference>
<dbReference type="SUPFAM" id="SSF56281">
    <property type="entry name" value="Metallo-hydrolase/oxidoreductase"/>
    <property type="match status" value="1"/>
</dbReference>
<dbReference type="PROSITE" id="PS00201">
    <property type="entry name" value="FLAVODOXIN"/>
    <property type="match status" value="1"/>
</dbReference>
<dbReference type="PROSITE" id="PS50902">
    <property type="entry name" value="FLAVODOXIN_LIKE"/>
    <property type="match status" value="1"/>
</dbReference>
<sequence>MPAIKIKDNIFSVGVLNPSLRIFDIIMKTEYGTSYNAYLIKGKKNVLIDTVHGRFFDEYLENIKSVIDPSSIDYVIMNHCEPDHSGSLARLYEVAPQIKVIASNAGKIYLKNITNKETLDVKAVKTNDTLDIGNGKVLKFAIAPFLHWPDSMFTILEEDKIAFTCDFLGCHFCEPRMFDTKITYMPKYEKSFKEYYDAIFSPFKPYVVKGLDILDALDLDFIATSHGPILTREGLLAASKQKYRDLSSEIQSTTKYIPIFYCSAYGNTEILANEIASGIKSVLNDANIEMLDIINYDYSDLKEKINICDAFMLGTPTINKDALFPIWELIGGIDAVNCKNKPASAFGSFGWSGEAIPFVISRLKELKLKVFQDGFTCLFVPSEDDIKKAFKFGEDFAKSI</sequence>
<feature type="chain" id="PRO_0000405539" description="Flavo-diiron protein FprA2">
    <location>
        <begin position="1"/>
        <end position="400"/>
    </location>
</feature>
<feature type="domain" description="Flavodoxin-like" evidence="2">
    <location>
        <begin position="257"/>
        <end position="397"/>
    </location>
</feature>
<feature type="region of interest" description="Zinc metallo-hydrolase">
    <location>
        <begin position="32"/>
        <end position="216"/>
    </location>
</feature>
<feature type="binding site" evidence="1">
    <location>
        <position position="79"/>
    </location>
    <ligand>
        <name>Fe cation</name>
        <dbReference type="ChEBI" id="CHEBI:24875"/>
        <label>1</label>
    </ligand>
</feature>
<feature type="binding site" evidence="1">
    <location>
        <position position="81"/>
    </location>
    <ligand>
        <name>Fe cation</name>
        <dbReference type="ChEBI" id="CHEBI:24875"/>
        <label>1</label>
    </ligand>
</feature>
<feature type="binding site" evidence="1">
    <location>
        <position position="83"/>
    </location>
    <ligand>
        <name>Fe cation</name>
        <dbReference type="ChEBI" id="CHEBI:24875"/>
        <label>2</label>
    </ligand>
</feature>
<feature type="binding site" evidence="1">
    <location>
        <position position="147"/>
    </location>
    <ligand>
        <name>Fe cation</name>
        <dbReference type="ChEBI" id="CHEBI:24875"/>
        <label>1</label>
    </ligand>
</feature>
<feature type="binding site" evidence="1">
    <location>
        <position position="166"/>
    </location>
    <ligand>
        <name>Fe cation</name>
        <dbReference type="ChEBI" id="CHEBI:24875"/>
        <label>1</label>
    </ligand>
</feature>
<feature type="binding site" evidence="1">
    <location>
        <position position="166"/>
    </location>
    <ligand>
        <name>Fe cation</name>
        <dbReference type="ChEBI" id="CHEBI:24875"/>
        <label>2</label>
    </ligand>
</feature>
<feature type="binding site" evidence="1">
    <location>
        <position position="226"/>
    </location>
    <ligand>
        <name>Fe cation</name>
        <dbReference type="ChEBI" id="CHEBI:24875"/>
        <label>2</label>
    </ligand>
</feature>
<feature type="binding site" evidence="2">
    <location>
        <begin position="263"/>
        <end position="267"/>
    </location>
    <ligand>
        <name>FMN</name>
        <dbReference type="ChEBI" id="CHEBI:58210"/>
    </ligand>
</feature>
<feature type="binding site" evidence="2">
    <location>
        <begin position="345"/>
        <end position="372"/>
    </location>
    <ligand>
        <name>FMN</name>
        <dbReference type="ChEBI" id="CHEBI:58210"/>
    </ligand>
</feature>